<name>ILVD1_CUPPJ</name>
<evidence type="ECO:0000255" key="1">
    <source>
        <dbReference type="HAMAP-Rule" id="MF_00012"/>
    </source>
</evidence>
<dbReference type="EC" id="4.2.1.9" evidence="1"/>
<dbReference type="EMBL" id="CP000090">
    <property type="protein sequence ID" value="AAZ60021.1"/>
    <property type="molecule type" value="Genomic_DNA"/>
</dbReference>
<dbReference type="SMR" id="Q475B2"/>
<dbReference type="STRING" id="264198.Reut_A0639"/>
<dbReference type="KEGG" id="reu:Reut_A0639"/>
<dbReference type="eggNOG" id="COG0129">
    <property type="taxonomic scope" value="Bacteria"/>
</dbReference>
<dbReference type="HOGENOM" id="CLU_014271_4_2_4"/>
<dbReference type="OrthoDB" id="9807077at2"/>
<dbReference type="UniPathway" id="UPA00047">
    <property type="reaction ID" value="UER00057"/>
</dbReference>
<dbReference type="UniPathway" id="UPA00049">
    <property type="reaction ID" value="UER00061"/>
</dbReference>
<dbReference type="GO" id="GO:0051537">
    <property type="term" value="F:2 iron, 2 sulfur cluster binding"/>
    <property type="evidence" value="ECO:0007669"/>
    <property type="project" value="UniProtKB-UniRule"/>
</dbReference>
<dbReference type="GO" id="GO:0004160">
    <property type="term" value="F:dihydroxy-acid dehydratase activity"/>
    <property type="evidence" value="ECO:0007669"/>
    <property type="project" value="UniProtKB-UniRule"/>
</dbReference>
<dbReference type="GO" id="GO:0000287">
    <property type="term" value="F:magnesium ion binding"/>
    <property type="evidence" value="ECO:0007669"/>
    <property type="project" value="UniProtKB-UniRule"/>
</dbReference>
<dbReference type="GO" id="GO:0009097">
    <property type="term" value="P:isoleucine biosynthetic process"/>
    <property type="evidence" value="ECO:0007669"/>
    <property type="project" value="UniProtKB-UniRule"/>
</dbReference>
<dbReference type="GO" id="GO:0009099">
    <property type="term" value="P:L-valine biosynthetic process"/>
    <property type="evidence" value="ECO:0007669"/>
    <property type="project" value="UniProtKB-UniRule"/>
</dbReference>
<dbReference type="FunFam" id="3.50.30.80:FF:000001">
    <property type="entry name" value="Dihydroxy-acid dehydratase"/>
    <property type="match status" value="1"/>
</dbReference>
<dbReference type="Gene3D" id="3.50.30.80">
    <property type="entry name" value="IlvD/EDD C-terminal domain-like"/>
    <property type="match status" value="1"/>
</dbReference>
<dbReference type="HAMAP" id="MF_00012">
    <property type="entry name" value="IlvD"/>
    <property type="match status" value="1"/>
</dbReference>
<dbReference type="InterPro" id="IPR050165">
    <property type="entry name" value="DHAD_IlvD/Edd"/>
</dbReference>
<dbReference type="InterPro" id="IPR042096">
    <property type="entry name" value="Dihydro-acid_dehy_C"/>
</dbReference>
<dbReference type="InterPro" id="IPR004404">
    <property type="entry name" value="DihydroxyA_deHydtase"/>
</dbReference>
<dbReference type="InterPro" id="IPR020558">
    <property type="entry name" value="DiOHA_6PGluconate_deHydtase_CS"/>
</dbReference>
<dbReference type="InterPro" id="IPR056740">
    <property type="entry name" value="ILV_EDD_C"/>
</dbReference>
<dbReference type="InterPro" id="IPR000581">
    <property type="entry name" value="ILV_EDD_N"/>
</dbReference>
<dbReference type="InterPro" id="IPR037237">
    <property type="entry name" value="IlvD/EDD_N"/>
</dbReference>
<dbReference type="NCBIfam" id="TIGR00110">
    <property type="entry name" value="ilvD"/>
    <property type="match status" value="1"/>
</dbReference>
<dbReference type="NCBIfam" id="NF002068">
    <property type="entry name" value="PRK00911.1"/>
    <property type="match status" value="1"/>
</dbReference>
<dbReference type="PANTHER" id="PTHR21000">
    <property type="entry name" value="DIHYDROXY-ACID DEHYDRATASE DAD"/>
    <property type="match status" value="1"/>
</dbReference>
<dbReference type="PANTHER" id="PTHR21000:SF5">
    <property type="entry name" value="DIHYDROXY-ACID DEHYDRATASE, MITOCHONDRIAL"/>
    <property type="match status" value="1"/>
</dbReference>
<dbReference type="Pfam" id="PF24877">
    <property type="entry name" value="ILV_EDD_C"/>
    <property type="match status" value="1"/>
</dbReference>
<dbReference type="Pfam" id="PF00920">
    <property type="entry name" value="ILVD_EDD_N"/>
    <property type="match status" value="1"/>
</dbReference>
<dbReference type="SUPFAM" id="SSF143975">
    <property type="entry name" value="IlvD/EDD N-terminal domain-like"/>
    <property type="match status" value="1"/>
</dbReference>
<dbReference type="SUPFAM" id="SSF52016">
    <property type="entry name" value="LeuD/IlvD-like"/>
    <property type="match status" value="1"/>
</dbReference>
<dbReference type="PROSITE" id="PS00886">
    <property type="entry name" value="ILVD_EDD_1"/>
    <property type="match status" value="1"/>
</dbReference>
<dbReference type="PROSITE" id="PS00887">
    <property type="entry name" value="ILVD_EDD_2"/>
    <property type="match status" value="1"/>
</dbReference>
<accession>Q475B2</accession>
<keyword id="KW-0001">2Fe-2S</keyword>
<keyword id="KW-0028">Amino-acid biosynthesis</keyword>
<keyword id="KW-0100">Branched-chain amino acid biosynthesis</keyword>
<keyword id="KW-0408">Iron</keyword>
<keyword id="KW-0411">Iron-sulfur</keyword>
<keyword id="KW-0456">Lyase</keyword>
<keyword id="KW-0460">Magnesium</keyword>
<keyword id="KW-0479">Metal-binding</keyword>
<reference key="1">
    <citation type="journal article" date="2010" name="PLoS ONE">
        <title>The complete multipartite genome sequence of Cupriavidus necator JMP134, a versatile pollutant degrader.</title>
        <authorList>
            <person name="Lykidis A."/>
            <person name="Perez-Pantoja D."/>
            <person name="Ledger T."/>
            <person name="Mavromatis K."/>
            <person name="Anderson I.J."/>
            <person name="Ivanova N.N."/>
            <person name="Hooper S.D."/>
            <person name="Lapidus A."/>
            <person name="Lucas S."/>
            <person name="Gonzalez B."/>
            <person name="Kyrpides N.C."/>
        </authorList>
    </citation>
    <scope>NUCLEOTIDE SEQUENCE [LARGE SCALE GENOMIC DNA]</scope>
    <source>
        <strain>JMP134 / LMG 1197</strain>
    </source>
</reference>
<sequence length="557" mass="59279">MAFNKRSRNITQGVARSPNRSMYYALGYQKEDFDKPMVGIANGHSTITPCNAGLQRLADAAIDAVKASDANPQVFGTPTISDGMSMGTEGMKYSLISREVIADCIETAAQGQWMDGVVVIGGCDKNMPGGMIALARTNVPGIYVYGGTIKPGNWKGKDLTIVSSFEAVGEFTAGRMSEEDFEGVERNACPSTGSCGGMYTANTMSSSFEALGMSLLYSSTMANPDQEKVDSAAESARVLVEAIKKDIKPRDIITRKSIENAVALIMATGGSTNAVLHYLAIAHSAEVEWTIDDFERIRRKVPVICNLKPSGQYVATDLHKAGGIPQVMKILLKAGLLHGDCLTITGRTLAEELEHVPDQPRADQDVIMPIEKALYAEGHLAILKGNLAEEGAVAKITGLKNPVITGPARVFEDEQSAMEAILADKINAGDVLVLRYLGPKGGPGMPEMLAPTSAIIGKGLGESVGFITDGRFSGGTWGMVVGHVAPEAYVGGNIALVREGDSITIDAHKLVLQVNVSDEELARRRAEWKQPVARYTRGVLAKFARLASTASKGAVTD</sequence>
<comment type="function">
    <text evidence="1">Functions in the biosynthesis of branched-chain amino acids. Catalyzes the dehydration of (2R,3R)-2,3-dihydroxy-3-methylpentanoate (2,3-dihydroxy-3-methylvalerate) into 2-oxo-3-methylpentanoate (2-oxo-3-methylvalerate) and of (2R)-2,3-dihydroxy-3-methylbutanoate (2,3-dihydroxyisovalerate) into 2-oxo-3-methylbutanoate (2-oxoisovalerate), the penultimate precursor to L-isoleucine and L-valine, respectively.</text>
</comment>
<comment type="catalytic activity">
    <reaction evidence="1">
        <text>(2R)-2,3-dihydroxy-3-methylbutanoate = 3-methyl-2-oxobutanoate + H2O</text>
        <dbReference type="Rhea" id="RHEA:24809"/>
        <dbReference type="ChEBI" id="CHEBI:11851"/>
        <dbReference type="ChEBI" id="CHEBI:15377"/>
        <dbReference type="ChEBI" id="CHEBI:49072"/>
        <dbReference type="EC" id="4.2.1.9"/>
    </reaction>
    <physiologicalReaction direction="left-to-right" evidence="1">
        <dbReference type="Rhea" id="RHEA:24810"/>
    </physiologicalReaction>
</comment>
<comment type="catalytic activity">
    <reaction evidence="1">
        <text>(2R,3R)-2,3-dihydroxy-3-methylpentanoate = (S)-3-methyl-2-oxopentanoate + H2O</text>
        <dbReference type="Rhea" id="RHEA:27694"/>
        <dbReference type="ChEBI" id="CHEBI:15377"/>
        <dbReference type="ChEBI" id="CHEBI:35146"/>
        <dbReference type="ChEBI" id="CHEBI:49258"/>
        <dbReference type="EC" id="4.2.1.9"/>
    </reaction>
    <physiologicalReaction direction="left-to-right" evidence="1">
        <dbReference type="Rhea" id="RHEA:27695"/>
    </physiologicalReaction>
</comment>
<comment type="cofactor">
    <cofactor evidence="1">
        <name>[2Fe-2S] cluster</name>
        <dbReference type="ChEBI" id="CHEBI:190135"/>
    </cofactor>
    <text evidence="1">Binds 1 [2Fe-2S] cluster per subunit. This cluster acts as a Lewis acid cofactor.</text>
</comment>
<comment type="cofactor">
    <cofactor evidence="1">
        <name>Mg(2+)</name>
        <dbReference type="ChEBI" id="CHEBI:18420"/>
    </cofactor>
</comment>
<comment type="pathway">
    <text evidence="1">Amino-acid biosynthesis; L-isoleucine biosynthesis; L-isoleucine from 2-oxobutanoate: step 3/4.</text>
</comment>
<comment type="pathway">
    <text evidence="1">Amino-acid biosynthesis; L-valine biosynthesis; L-valine from pyruvate: step 3/4.</text>
</comment>
<comment type="subunit">
    <text evidence="1">Homodimer.</text>
</comment>
<comment type="similarity">
    <text evidence="1">Belongs to the IlvD/Edd family.</text>
</comment>
<protein>
    <recommendedName>
        <fullName evidence="1">Dihydroxy-acid dehydratase 1</fullName>
        <shortName evidence="1">DAD 1</shortName>
        <ecNumber evidence="1">4.2.1.9</ecNumber>
    </recommendedName>
</protein>
<gene>
    <name evidence="1" type="primary">ilvD1</name>
    <name type="ordered locus">Reut_A0639</name>
</gene>
<organism>
    <name type="scientific">Cupriavidus pinatubonensis (strain JMP 134 / LMG 1197)</name>
    <name type="common">Cupriavidus necator (strain JMP 134)</name>
    <dbReference type="NCBI Taxonomy" id="264198"/>
    <lineage>
        <taxon>Bacteria</taxon>
        <taxon>Pseudomonadati</taxon>
        <taxon>Pseudomonadota</taxon>
        <taxon>Betaproteobacteria</taxon>
        <taxon>Burkholderiales</taxon>
        <taxon>Burkholderiaceae</taxon>
        <taxon>Cupriavidus</taxon>
    </lineage>
</organism>
<proteinExistence type="inferred from homology"/>
<feature type="chain" id="PRO_0000225415" description="Dihydroxy-acid dehydratase 1">
    <location>
        <begin position="1"/>
        <end position="557"/>
    </location>
</feature>
<feature type="active site" description="Proton acceptor" evidence="1">
    <location>
        <position position="473"/>
    </location>
</feature>
<feature type="binding site" evidence="1">
    <location>
        <position position="50"/>
    </location>
    <ligand>
        <name>[2Fe-2S] cluster</name>
        <dbReference type="ChEBI" id="CHEBI:190135"/>
    </ligand>
</feature>
<feature type="binding site" evidence="1">
    <location>
        <position position="82"/>
    </location>
    <ligand>
        <name>Mg(2+)</name>
        <dbReference type="ChEBI" id="CHEBI:18420"/>
    </ligand>
</feature>
<feature type="binding site" evidence="1">
    <location>
        <position position="123"/>
    </location>
    <ligand>
        <name>[2Fe-2S] cluster</name>
        <dbReference type="ChEBI" id="CHEBI:190135"/>
    </ligand>
</feature>
<feature type="binding site" evidence="1">
    <location>
        <position position="124"/>
    </location>
    <ligand>
        <name>Mg(2+)</name>
        <dbReference type="ChEBI" id="CHEBI:18420"/>
    </ligand>
</feature>
<feature type="binding site" description="via carbamate group" evidence="1">
    <location>
        <position position="125"/>
    </location>
    <ligand>
        <name>Mg(2+)</name>
        <dbReference type="ChEBI" id="CHEBI:18420"/>
    </ligand>
</feature>
<feature type="binding site" evidence="1">
    <location>
        <position position="195"/>
    </location>
    <ligand>
        <name>[2Fe-2S] cluster</name>
        <dbReference type="ChEBI" id="CHEBI:190135"/>
    </ligand>
</feature>
<feature type="binding site" evidence="1">
    <location>
        <position position="447"/>
    </location>
    <ligand>
        <name>Mg(2+)</name>
        <dbReference type="ChEBI" id="CHEBI:18420"/>
    </ligand>
</feature>
<feature type="modified residue" description="N6-carboxylysine" evidence="1">
    <location>
        <position position="125"/>
    </location>
</feature>